<accession>Q7XUU0</accession>
<accession>A0A0P0WAC1</accession>
<accession>Q0JD61</accession>
<gene>
    <name type="primary">CSLH3</name>
    <name type="ordered locus">Os04g0429600</name>
    <name type="ordered locus">LOC_Os04g35030</name>
    <name type="ORF">OSJNBa0042L16.14</name>
</gene>
<organism>
    <name type="scientific">Oryza sativa subsp. japonica</name>
    <name type="common">Rice</name>
    <dbReference type="NCBI Taxonomy" id="39947"/>
    <lineage>
        <taxon>Eukaryota</taxon>
        <taxon>Viridiplantae</taxon>
        <taxon>Streptophyta</taxon>
        <taxon>Embryophyta</taxon>
        <taxon>Tracheophyta</taxon>
        <taxon>Spermatophyta</taxon>
        <taxon>Magnoliopsida</taxon>
        <taxon>Liliopsida</taxon>
        <taxon>Poales</taxon>
        <taxon>Poaceae</taxon>
        <taxon>BOP clade</taxon>
        <taxon>Oryzoideae</taxon>
        <taxon>Oryzeae</taxon>
        <taxon>Oryzinae</taxon>
        <taxon>Oryza</taxon>
        <taxon>Oryza sativa</taxon>
    </lineage>
</organism>
<evidence type="ECO:0000255" key="1"/>
<evidence type="ECO:0000256" key="2">
    <source>
        <dbReference type="SAM" id="MobiDB-lite"/>
    </source>
</evidence>
<evidence type="ECO:0000305" key="3"/>
<protein>
    <recommendedName>
        <fullName>Putative cellulose synthase-like protein H3</fullName>
        <ecNumber>2.4.1.-</ecNumber>
    </recommendedName>
    <alternativeName>
        <fullName>OsCslH3</fullName>
    </alternativeName>
</protein>
<dbReference type="EC" id="2.4.1.-"/>
<dbReference type="EMBL" id="AL606632">
    <property type="protein sequence ID" value="CAD41008.3"/>
    <property type="molecule type" value="Genomic_DNA"/>
</dbReference>
<dbReference type="EMBL" id="AP008210">
    <property type="protein sequence ID" value="BAF14726.2"/>
    <property type="molecule type" value="Genomic_DNA"/>
</dbReference>
<dbReference type="EMBL" id="AP014960">
    <property type="protein sequence ID" value="BAS89245.1"/>
    <property type="molecule type" value="Genomic_DNA"/>
</dbReference>
<dbReference type="SMR" id="Q7XUU0"/>
<dbReference type="FunCoup" id="Q7XUU0">
    <property type="interactions" value="291"/>
</dbReference>
<dbReference type="STRING" id="39947.Q7XUU0"/>
<dbReference type="CAZy" id="GT2">
    <property type="family name" value="Glycosyltransferase Family 2"/>
</dbReference>
<dbReference type="PaxDb" id="39947-Q7XUU0"/>
<dbReference type="EnsemblPlants" id="Os04t0429600-00">
    <property type="protein sequence ID" value="Os04t0429600-00"/>
    <property type="gene ID" value="Os04g0429600"/>
</dbReference>
<dbReference type="Gramene" id="Os04t0429600-00">
    <property type="protein sequence ID" value="Os04t0429600-00"/>
    <property type="gene ID" value="Os04g0429600"/>
</dbReference>
<dbReference type="KEGG" id="dosa:Os04g0429600"/>
<dbReference type="eggNOG" id="ENOG502QTT0">
    <property type="taxonomic scope" value="Eukaryota"/>
</dbReference>
<dbReference type="HOGENOM" id="CLU_001418_3_3_1"/>
<dbReference type="InParanoid" id="Q7XUU0"/>
<dbReference type="OMA" id="FCSAYVV"/>
<dbReference type="Proteomes" id="UP000000763">
    <property type="component" value="Chromosome 4"/>
</dbReference>
<dbReference type="Proteomes" id="UP000059680">
    <property type="component" value="Chromosome 4"/>
</dbReference>
<dbReference type="GO" id="GO:0000139">
    <property type="term" value="C:Golgi membrane"/>
    <property type="evidence" value="ECO:0007669"/>
    <property type="project" value="UniProtKB-SubCell"/>
</dbReference>
<dbReference type="GO" id="GO:0005886">
    <property type="term" value="C:plasma membrane"/>
    <property type="evidence" value="ECO:0000318"/>
    <property type="project" value="GO_Central"/>
</dbReference>
<dbReference type="GO" id="GO:0016760">
    <property type="term" value="F:cellulose synthase (UDP-forming) activity"/>
    <property type="evidence" value="ECO:0007669"/>
    <property type="project" value="InterPro"/>
</dbReference>
<dbReference type="GO" id="GO:0016759">
    <property type="term" value="F:cellulose synthase activity"/>
    <property type="evidence" value="ECO:0000318"/>
    <property type="project" value="GO_Central"/>
</dbReference>
<dbReference type="GO" id="GO:0071555">
    <property type="term" value="P:cell wall organization"/>
    <property type="evidence" value="ECO:0007669"/>
    <property type="project" value="UniProtKB-KW"/>
</dbReference>
<dbReference type="GO" id="GO:0030244">
    <property type="term" value="P:cellulose biosynthetic process"/>
    <property type="evidence" value="ECO:0000318"/>
    <property type="project" value="GO_Central"/>
</dbReference>
<dbReference type="GO" id="GO:0009833">
    <property type="term" value="P:plant-type primary cell wall biogenesis"/>
    <property type="evidence" value="ECO:0000318"/>
    <property type="project" value="GO_Central"/>
</dbReference>
<dbReference type="Gene3D" id="3.90.550.10">
    <property type="entry name" value="Spore Coat Polysaccharide Biosynthesis Protein SpsA, Chain A"/>
    <property type="match status" value="1"/>
</dbReference>
<dbReference type="InterPro" id="IPR005150">
    <property type="entry name" value="Cellulose_synth"/>
</dbReference>
<dbReference type="InterPro" id="IPR029044">
    <property type="entry name" value="Nucleotide-diphossugar_trans"/>
</dbReference>
<dbReference type="PANTHER" id="PTHR13301">
    <property type="entry name" value="X-BOX TRANSCRIPTION FACTOR-RELATED"/>
    <property type="match status" value="1"/>
</dbReference>
<dbReference type="Pfam" id="PF03552">
    <property type="entry name" value="Cellulose_synt"/>
    <property type="match status" value="2"/>
</dbReference>
<sequence length="792" mass="88487">MAAASGEKEEEEKKLQERAPIRRTAWMLANFVVLFLLLALLVRRATAADAEERGVGGAAWRVAFACEAWFAFVWLLNMNAKWSPARFDTYPENLAGRCGAAHRPRKSSCISGHLDLMRRQCALMQDRRAAGGRHVRDDGGPGARAAGGDGEQGALAARRRLLPGRRRRRRRRRLACYVSDDGCSPVTYYALREAAGFARTWVPFCRRHGVAVRAPFRYFASAPEFGPADRKFLDDWTFMKSEYDKLVRRIEDADETTLLRQGGGEFAEFMDAKRTNHRAIVKVIWDNNSKNRIGEEGGFPHLIYVSREKSPGHHHHYKAGAMNALTRVSAVMTNAPIMLNVDCDMFANDPQVVLHAMCLLLGFDDEISSGFVQVPQSFYGDLKDDPFGNKLEVIYKGLFYGGTGCFHCRKAIYGIEPDSIVVGREGAAGSPSYKELQFKFESSEELKESARYIISGDMSGEPIVDISSHIEVAKEVSSCNYESGTHWGLEVGWAYGSMTEDILTGQRIHAAGWRSAKLETEPPAFLGCAPTGGPACLTQFKRWATGLFEILISQNNPLLLSIFKHLQFRQCLAYLTLYVWAVRGFVELCYELLVPYCLLTNQSFLSKASENCFNITLALFLTYNTYNFVEYMECGLSVRAWWNNHRMQRIISASAWLLAFFTVLLKTIGLSETVFEVTRKEKSTSDGNGQNDEVDPERFTFDASPVFIPVTALTMLNIVAITIGTWRAVFGTTEDVPGGPGISEFMSCGWLLLCLLPFVRGLVGKGSYGIPWSVKLKASLLVALFLFCSNRN</sequence>
<keyword id="KW-0961">Cell wall biogenesis/degradation</keyword>
<keyword id="KW-0328">Glycosyltransferase</keyword>
<keyword id="KW-0333">Golgi apparatus</keyword>
<keyword id="KW-0472">Membrane</keyword>
<keyword id="KW-1185">Reference proteome</keyword>
<keyword id="KW-0808">Transferase</keyword>
<keyword id="KW-0812">Transmembrane</keyword>
<keyword id="KW-1133">Transmembrane helix</keyword>
<comment type="function">
    <text>Thought to be a Golgi-localized beta-glycan synthase that polymerize the backbones of noncellulosic polysaccharides (hemicelluloses) of plant cell wall.</text>
</comment>
<comment type="subcellular location">
    <subcellularLocation>
        <location evidence="3">Golgi apparatus membrane</location>
        <topology evidence="3">Multi-pass membrane protein</topology>
    </subcellularLocation>
</comment>
<comment type="similarity">
    <text evidence="3">Belongs to the glycosyltransferase 2 family. Plant cellulose synthase-like H subfamily.</text>
</comment>
<name>CSLH3_ORYSJ</name>
<reference key="1">
    <citation type="journal article" date="2002" name="Nature">
        <title>Sequence and analysis of rice chromosome 4.</title>
        <authorList>
            <person name="Feng Q."/>
            <person name="Zhang Y."/>
            <person name="Hao P."/>
            <person name="Wang S."/>
            <person name="Fu G."/>
            <person name="Huang Y."/>
            <person name="Li Y."/>
            <person name="Zhu J."/>
            <person name="Liu Y."/>
            <person name="Hu X."/>
            <person name="Jia P."/>
            <person name="Zhang Y."/>
            <person name="Zhao Q."/>
            <person name="Ying K."/>
            <person name="Yu S."/>
            <person name="Tang Y."/>
            <person name="Weng Q."/>
            <person name="Zhang L."/>
            <person name="Lu Y."/>
            <person name="Mu J."/>
            <person name="Lu Y."/>
            <person name="Zhang L.S."/>
            <person name="Yu Z."/>
            <person name="Fan D."/>
            <person name="Liu X."/>
            <person name="Lu T."/>
            <person name="Li C."/>
            <person name="Wu Y."/>
            <person name="Sun T."/>
            <person name="Lei H."/>
            <person name="Li T."/>
            <person name="Hu H."/>
            <person name="Guan J."/>
            <person name="Wu M."/>
            <person name="Zhang R."/>
            <person name="Zhou B."/>
            <person name="Chen Z."/>
            <person name="Chen L."/>
            <person name="Jin Z."/>
            <person name="Wang R."/>
            <person name="Yin H."/>
            <person name="Cai Z."/>
            <person name="Ren S."/>
            <person name="Lv G."/>
            <person name="Gu W."/>
            <person name="Zhu G."/>
            <person name="Tu Y."/>
            <person name="Jia J."/>
            <person name="Zhang Y."/>
            <person name="Chen J."/>
            <person name="Kang H."/>
            <person name="Chen X."/>
            <person name="Shao C."/>
            <person name="Sun Y."/>
            <person name="Hu Q."/>
            <person name="Zhang X."/>
            <person name="Zhang W."/>
            <person name="Wang L."/>
            <person name="Ding C."/>
            <person name="Sheng H."/>
            <person name="Gu J."/>
            <person name="Chen S."/>
            <person name="Ni L."/>
            <person name="Zhu F."/>
            <person name="Chen W."/>
            <person name="Lan L."/>
            <person name="Lai Y."/>
            <person name="Cheng Z."/>
            <person name="Gu M."/>
            <person name="Jiang J."/>
            <person name="Li J."/>
            <person name="Hong G."/>
            <person name="Xue Y."/>
            <person name="Han B."/>
        </authorList>
    </citation>
    <scope>NUCLEOTIDE SEQUENCE [LARGE SCALE GENOMIC DNA]</scope>
    <source>
        <strain>cv. Nipponbare</strain>
    </source>
</reference>
<reference key="2">
    <citation type="journal article" date="2005" name="Nature">
        <title>The map-based sequence of the rice genome.</title>
        <authorList>
            <consortium name="International rice genome sequencing project (IRGSP)"/>
        </authorList>
    </citation>
    <scope>NUCLEOTIDE SEQUENCE [LARGE SCALE GENOMIC DNA]</scope>
    <source>
        <strain>cv. Nipponbare</strain>
    </source>
</reference>
<reference key="3">
    <citation type="journal article" date="2008" name="Nucleic Acids Res.">
        <title>The rice annotation project database (RAP-DB): 2008 update.</title>
        <authorList>
            <consortium name="The rice annotation project (RAP)"/>
        </authorList>
    </citation>
    <scope>GENOME REANNOTATION</scope>
    <source>
        <strain>cv. Nipponbare</strain>
    </source>
</reference>
<reference key="4">
    <citation type="journal article" date="2013" name="Rice">
        <title>Improvement of the Oryza sativa Nipponbare reference genome using next generation sequence and optical map data.</title>
        <authorList>
            <person name="Kawahara Y."/>
            <person name="de la Bastide M."/>
            <person name="Hamilton J.P."/>
            <person name="Kanamori H."/>
            <person name="McCombie W.R."/>
            <person name="Ouyang S."/>
            <person name="Schwartz D.C."/>
            <person name="Tanaka T."/>
            <person name="Wu J."/>
            <person name="Zhou S."/>
            <person name="Childs K.L."/>
            <person name="Davidson R.M."/>
            <person name="Lin H."/>
            <person name="Quesada-Ocampo L."/>
            <person name="Vaillancourt B."/>
            <person name="Sakai H."/>
            <person name="Lee S.S."/>
            <person name="Kim J."/>
            <person name="Numa H."/>
            <person name="Itoh T."/>
            <person name="Buell C.R."/>
            <person name="Matsumoto T."/>
        </authorList>
    </citation>
    <scope>GENOME REANNOTATION</scope>
    <source>
        <strain>cv. Nipponbare</strain>
    </source>
</reference>
<reference key="5">
    <citation type="journal article" date="2002" name="Plant Physiol.">
        <title>Cellulose synthase-like genes of rice.</title>
        <authorList>
            <person name="Hazen S.P."/>
            <person name="Scott-Craig J.S."/>
            <person name="Walton J.D."/>
        </authorList>
    </citation>
    <scope>GENE FAMILY</scope>
    <scope>NOMENCLATURE</scope>
</reference>
<proteinExistence type="inferred from homology"/>
<feature type="chain" id="PRO_0000319413" description="Putative cellulose synthase-like protein H3">
    <location>
        <begin position="1"/>
        <end position="792"/>
    </location>
</feature>
<feature type="transmembrane region" description="Helical" evidence="1">
    <location>
        <begin position="25"/>
        <end position="45"/>
    </location>
</feature>
<feature type="transmembrane region" description="Helical" evidence="1">
    <location>
        <begin position="55"/>
        <end position="75"/>
    </location>
</feature>
<feature type="transmembrane region" description="Helical" evidence="1">
    <location>
        <begin position="579"/>
        <end position="599"/>
    </location>
</feature>
<feature type="transmembrane region" description="Helical" evidence="1">
    <location>
        <begin position="613"/>
        <end position="632"/>
    </location>
</feature>
<feature type="transmembrane region" description="Helical" evidence="1">
    <location>
        <begin position="650"/>
        <end position="670"/>
    </location>
</feature>
<feature type="transmembrane region" description="Helical" evidence="1">
    <location>
        <begin position="706"/>
        <end position="726"/>
    </location>
</feature>
<feature type="transmembrane region" description="Helical" evidence="1">
    <location>
        <begin position="739"/>
        <end position="759"/>
    </location>
</feature>
<feature type="transmembrane region" description="Helical" evidence="1">
    <location>
        <begin position="768"/>
        <end position="788"/>
    </location>
</feature>
<feature type="region of interest" description="Disordered" evidence="2">
    <location>
        <begin position="132"/>
        <end position="154"/>
    </location>
</feature>
<feature type="compositionally biased region" description="Gly residues" evidence="2">
    <location>
        <begin position="140"/>
        <end position="151"/>
    </location>
</feature>
<feature type="active site" evidence="1">
    <location>
        <position position="181"/>
    </location>
</feature>
<feature type="active site" evidence="1">
    <location>
        <position position="501"/>
    </location>
</feature>